<gene>
    <name type="ordered locus">SA0636</name>
</gene>
<reference key="1">
    <citation type="journal article" date="2001" name="Lancet">
        <title>Whole genome sequencing of meticillin-resistant Staphylococcus aureus.</title>
        <authorList>
            <person name="Kuroda M."/>
            <person name="Ohta T."/>
            <person name="Uchiyama I."/>
            <person name="Baba T."/>
            <person name="Yuzawa H."/>
            <person name="Kobayashi I."/>
            <person name="Cui L."/>
            <person name="Oguchi A."/>
            <person name="Aoki K."/>
            <person name="Nagai Y."/>
            <person name="Lian J.-Q."/>
            <person name="Ito T."/>
            <person name="Kanamori M."/>
            <person name="Matsumaru H."/>
            <person name="Maruyama A."/>
            <person name="Murakami H."/>
            <person name="Hosoyama A."/>
            <person name="Mizutani-Ui Y."/>
            <person name="Takahashi N.K."/>
            <person name="Sawano T."/>
            <person name="Inoue R."/>
            <person name="Kaito C."/>
            <person name="Sekimizu K."/>
            <person name="Hirakawa H."/>
            <person name="Kuhara S."/>
            <person name="Goto S."/>
            <person name="Yabuzaki J."/>
            <person name="Kanehisa M."/>
            <person name="Yamashita A."/>
            <person name="Oshima K."/>
            <person name="Furuya K."/>
            <person name="Yoshino C."/>
            <person name="Shiba T."/>
            <person name="Hattori M."/>
            <person name="Ogasawara N."/>
            <person name="Hayashi H."/>
            <person name="Hiramatsu K."/>
        </authorList>
    </citation>
    <scope>NUCLEOTIDE SEQUENCE [LARGE SCALE GENOMIC DNA]</scope>
    <source>
        <strain>N315</strain>
    </source>
</reference>
<comment type="similarity">
    <text evidence="1">Belongs to the UPF0178 family.</text>
</comment>
<proteinExistence type="inferred from homology"/>
<feature type="chain" id="PRO_0000176013" description="UPF0178 protein SA0636">
    <location>
        <begin position="1"/>
        <end position="152"/>
    </location>
</feature>
<organism>
    <name type="scientific">Staphylococcus aureus (strain N315)</name>
    <dbReference type="NCBI Taxonomy" id="158879"/>
    <lineage>
        <taxon>Bacteria</taxon>
        <taxon>Bacillati</taxon>
        <taxon>Bacillota</taxon>
        <taxon>Bacilli</taxon>
        <taxon>Bacillales</taxon>
        <taxon>Staphylococcaceae</taxon>
        <taxon>Staphylococcus</taxon>
    </lineage>
</organism>
<evidence type="ECO:0000305" key="1"/>
<dbReference type="EMBL" id="BA000018">
    <property type="protein sequence ID" value="BAB41869.1"/>
    <property type="molecule type" value="Genomic_DNA"/>
</dbReference>
<dbReference type="PIR" id="B89839">
    <property type="entry name" value="B89839"/>
</dbReference>
<dbReference type="RefSeq" id="WP_000148826.1">
    <property type="nucleotide sequence ID" value="NC_002745.2"/>
</dbReference>
<dbReference type="SMR" id="P67337"/>
<dbReference type="EnsemblBacteria" id="BAB41869">
    <property type="protein sequence ID" value="BAB41869"/>
    <property type="gene ID" value="BAB41869"/>
</dbReference>
<dbReference type="KEGG" id="sau:SA0636"/>
<dbReference type="HOGENOM" id="CLU_106619_0_0_9"/>
<dbReference type="HAMAP" id="MF_00489">
    <property type="entry name" value="UPF0178"/>
    <property type="match status" value="1"/>
</dbReference>
<dbReference type="InterPro" id="IPR003791">
    <property type="entry name" value="UPF0178"/>
</dbReference>
<dbReference type="NCBIfam" id="NF001095">
    <property type="entry name" value="PRK00124.1"/>
    <property type="match status" value="1"/>
</dbReference>
<dbReference type="PANTHER" id="PTHR35146">
    <property type="entry name" value="UPF0178 PROTEIN YAII"/>
    <property type="match status" value="1"/>
</dbReference>
<dbReference type="PANTHER" id="PTHR35146:SF1">
    <property type="entry name" value="UPF0178 PROTEIN YAII"/>
    <property type="match status" value="1"/>
</dbReference>
<dbReference type="Pfam" id="PF02639">
    <property type="entry name" value="DUF188"/>
    <property type="match status" value="1"/>
</dbReference>
<sequence length="152" mass="17240">MTHIIIDGDACPVVDSIIDLTTETGIFVTIIRSFSHFSNQLYPPHVSTLYVDDGPDAVDYKIVQLSTKDDIVVTQDYGLASLLVDKVLIVMHHNGKIYNSKNIQQLLDKRYINAQIRKQGGRHKGPPPFTKQDQKVFEQSLLKVIHRIKELD</sequence>
<name>Y636_STAAN</name>
<accession>P67337</accession>
<accession>Q99VU0</accession>
<protein>
    <recommendedName>
        <fullName>UPF0178 protein SA0636</fullName>
    </recommendedName>
</protein>